<gene>
    <name evidence="1" type="primary">alaE</name>
    <name type="ordered locus">SARI_00171</name>
</gene>
<dbReference type="EMBL" id="CP000880">
    <property type="protein sequence ID" value="ABX20118.1"/>
    <property type="status" value="ALT_INIT"/>
    <property type="molecule type" value="Genomic_DNA"/>
</dbReference>
<dbReference type="STRING" id="41514.SARI_00171"/>
<dbReference type="KEGG" id="ses:SARI_00171"/>
<dbReference type="HOGENOM" id="CLU_126493_0_0_6"/>
<dbReference type="Proteomes" id="UP000002084">
    <property type="component" value="Chromosome"/>
</dbReference>
<dbReference type="GO" id="GO:0005886">
    <property type="term" value="C:plasma membrane"/>
    <property type="evidence" value="ECO:0007669"/>
    <property type="project" value="UniProtKB-SubCell"/>
</dbReference>
<dbReference type="GO" id="GO:0034639">
    <property type="term" value="F:L-amino acid efflux transmembrane transporter activity"/>
    <property type="evidence" value="ECO:0007669"/>
    <property type="project" value="UniProtKB-UniRule"/>
</dbReference>
<dbReference type="GO" id="GO:0032973">
    <property type="term" value="P:amino acid export across plasma membrane"/>
    <property type="evidence" value="ECO:0007669"/>
    <property type="project" value="UniProtKB-UniRule"/>
</dbReference>
<dbReference type="HAMAP" id="MF_00914">
    <property type="entry name" value="L_Ala_exporter"/>
    <property type="match status" value="1"/>
</dbReference>
<dbReference type="InterPro" id="IPR010574">
    <property type="entry name" value="Ala_export_AlaE"/>
</dbReference>
<dbReference type="Pfam" id="PF06610">
    <property type="entry name" value="AlaE"/>
    <property type="match status" value="1"/>
</dbReference>
<proteinExistence type="inferred from homology"/>
<sequence length="149" mass="16674">MFSPQSRLRHAVADTFAMVVYCSVVNMLIEIFLSGMSVEQSLSSRLVAIPVNILIAWPYGVYRDLIMRVARKASPAGWAKNLADVLAYVTFQSPVYIIILLTVGADWHQIMAAVSSNIVVSMLMGAVYGYFLDYCRRLFKVSNYHQAKA</sequence>
<name>ALAE_SALAR</name>
<protein>
    <recommendedName>
        <fullName evidence="1">L-alanine exporter AlaE</fullName>
    </recommendedName>
</protein>
<feature type="chain" id="PRO_0000415628" description="L-alanine exporter AlaE">
    <location>
        <begin position="1"/>
        <end position="149"/>
    </location>
</feature>
<feature type="transmembrane region" description="Helical" evidence="1">
    <location>
        <begin position="16"/>
        <end position="36"/>
    </location>
</feature>
<feature type="transmembrane region" description="Helical" evidence="1">
    <location>
        <begin position="46"/>
        <end position="66"/>
    </location>
</feature>
<feature type="transmembrane region" description="Helical" evidence="1">
    <location>
        <begin position="85"/>
        <end position="105"/>
    </location>
</feature>
<feature type="transmembrane region" description="Helical" evidence="1">
    <location>
        <begin position="112"/>
        <end position="132"/>
    </location>
</feature>
<evidence type="ECO:0000255" key="1">
    <source>
        <dbReference type="HAMAP-Rule" id="MF_00914"/>
    </source>
</evidence>
<evidence type="ECO:0000305" key="2"/>
<organism>
    <name type="scientific">Salmonella arizonae (strain ATCC BAA-731 / CDC346-86 / RSK2980)</name>
    <dbReference type="NCBI Taxonomy" id="41514"/>
    <lineage>
        <taxon>Bacteria</taxon>
        <taxon>Pseudomonadati</taxon>
        <taxon>Pseudomonadota</taxon>
        <taxon>Gammaproteobacteria</taxon>
        <taxon>Enterobacterales</taxon>
        <taxon>Enterobacteriaceae</taxon>
        <taxon>Salmonella</taxon>
    </lineage>
</organism>
<reference key="1">
    <citation type="submission" date="2007-11" db="EMBL/GenBank/DDBJ databases">
        <authorList>
            <consortium name="The Salmonella enterica serovar Arizonae Genome Sequencing Project"/>
            <person name="McClelland M."/>
            <person name="Sanderson E.K."/>
            <person name="Porwollik S."/>
            <person name="Spieth J."/>
            <person name="Clifton W.S."/>
            <person name="Fulton R."/>
            <person name="Chunyan W."/>
            <person name="Wollam A."/>
            <person name="Shah N."/>
            <person name="Pepin K."/>
            <person name="Bhonagiri V."/>
            <person name="Nash W."/>
            <person name="Johnson M."/>
            <person name="Thiruvilangam P."/>
            <person name="Wilson R."/>
        </authorList>
    </citation>
    <scope>NUCLEOTIDE SEQUENCE [LARGE SCALE GENOMIC DNA]</scope>
    <source>
        <strain>ATCC BAA-731 / CDC346-86 / RSK2980</strain>
    </source>
</reference>
<accession>A9MG10</accession>
<keyword id="KW-0029">Amino-acid transport</keyword>
<keyword id="KW-0997">Cell inner membrane</keyword>
<keyword id="KW-1003">Cell membrane</keyword>
<keyword id="KW-0472">Membrane</keyword>
<keyword id="KW-1185">Reference proteome</keyword>
<keyword id="KW-0812">Transmembrane</keyword>
<keyword id="KW-1133">Transmembrane helix</keyword>
<keyword id="KW-0813">Transport</keyword>
<comment type="function">
    <text evidence="1">Exports L-alanine.</text>
</comment>
<comment type="subcellular location">
    <subcellularLocation>
        <location evidence="1">Cell inner membrane</location>
        <topology evidence="1">Multi-pass membrane protein</topology>
    </subcellularLocation>
</comment>
<comment type="similarity">
    <text evidence="1">Belongs to the AlaE exporter family.</text>
</comment>
<comment type="sequence caution" evidence="2">
    <conflict type="erroneous initiation">
        <sequence resource="EMBL-CDS" id="ABX20118"/>
    </conflict>
    <text>Truncated N-terminus.</text>
</comment>